<feature type="chain" id="PRO_1000202704" description="Peptide chain release factor 1">
    <location>
        <begin position="1"/>
        <end position="360"/>
    </location>
</feature>
<feature type="modified residue" description="N5-methylglutamine" evidence="1">
    <location>
        <position position="237"/>
    </location>
</feature>
<comment type="function">
    <text evidence="1">Peptide chain release factor 1 directs the termination of translation in response to the peptide chain termination codons UAG and UAA.</text>
</comment>
<comment type="subcellular location">
    <subcellularLocation>
        <location evidence="1">Cytoplasm</location>
    </subcellularLocation>
</comment>
<comment type="PTM">
    <text evidence="1">Methylated by PrmC. Methylation increases the termination efficiency of RF1.</text>
</comment>
<comment type="similarity">
    <text evidence="1">Belongs to the prokaryotic/mitochondrial release factor family.</text>
</comment>
<keyword id="KW-0963">Cytoplasm</keyword>
<keyword id="KW-0488">Methylation</keyword>
<keyword id="KW-0648">Protein biosynthesis</keyword>
<keyword id="KW-1185">Reference proteome</keyword>
<organism>
    <name type="scientific">Teredinibacter turnerae (strain ATCC 39867 / T7901)</name>
    <dbReference type="NCBI Taxonomy" id="377629"/>
    <lineage>
        <taxon>Bacteria</taxon>
        <taxon>Pseudomonadati</taxon>
        <taxon>Pseudomonadota</taxon>
        <taxon>Gammaproteobacteria</taxon>
        <taxon>Cellvibrionales</taxon>
        <taxon>Cellvibrionaceae</taxon>
        <taxon>Teredinibacter</taxon>
    </lineage>
</organism>
<gene>
    <name evidence="1" type="primary">prfA</name>
    <name type="ordered locus">TERTU_3844</name>
</gene>
<reference key="1">
    <citation type="journal article" date="2009" name="PLoS ONE">
        <title>The complete genome of Teredinibacter turnerae T7901: an intracellular endosymbiont of marine wood-boring bivalves (shipworms).</title>
        <authorList>
            <person name="Yang J.C."/>
            <person name="Madupu R."/>
            <person name="Durkin A.S."/>
            <person name="Ekborg N.A."/>
            <person name="Pedamallu C.S."/>
            <person name="Hostetler J.B."/>
            <person name="Radune D."/>
            <person name="Toms B.S."/>
            <person name="Henrissat B."/>
            <person name="Coutinho P.M."/>
            <person name="Schwarz S."/>
            <person name="Field L."/>
            <person name="Trindade-Silva A.E."/>
            <person name="Soares C.A.G."/>
            <person name="Elshahawi S."/>
            <person name="Hanora A."/>
            <person name="Schmidt E.W."/>
            <person name="Haygood M.G."/>
            <person name="Posfai J."/>
            <person name="Benner J."/>
            <person name="Madinger C."/>
            <person name="Nove J."/>
            <person name="Anton B."/>
            <person name="Chaudhary K."/>
            <person name="Foster J."/>
            <person name="Holman A."/>
            <person name="Kumar S."/>
            <person name="Lessard P.A."/>
            <person name="Luyten Y.A."/>
            <person name="Slatko B."/>
            <person name="Wood N."/>
            <person name="Wu B."/>
            <person name="Teplitski M."/>
            <person name="Mougous J.D."/>
            <person name="Ward N."/>
            <person name="Eisen J.A."/>
            <person name="Badger J.H."/>
            <person name="Distel D.L."/>
        </authorList>
    </citation>
    <scope>NUCLEOTIDE SEQUENCE [LARGE SCALE GENOMIC DNA]</scope>
    <source>
        <strain>ATCC 39867 / T7901</strain>
    </source>
</reference>
<evidence type="ECO:0000255" key="1">
    <source>
        <dbReference type="HAMAP-Rule" id="MF_00093"/>
    </source>
</evidence>
<proteinExistence type="inferred from homology"/>
<accession>C5BSZ6</accession>
<name>RF1_TERTT</name>
<sequence length="360" mass="40351">MKDSIKQKLENLVERYDEVGALLGDPDIIADQKKFRDLGKEYSELEPVVICYQEYRTVIENIAEAKMLMNDGDADMREMAQEELKTAEAQLEPLETQLQKLLLPKDPNDEKNVFLEIRAGTGGDEAAIFSGDLFRMYSRYAERAGWRIEIISENAGEHGGYKELITRVVGQGVYSQLKFESGAHRVQRVPETESQGRIHTSACTVAIMPEADESEEVELNKGDLRIDTFRASGAGGQHVNKTDSAIRITHIPTGIVVECQDERSQHKNRAKAMSLLAARINSAQAEQFAAEQASERKSLVGSGDRSERIRTYNYPQGRVTDHRINLTLYKLDEIMEGSLDEVIQPLVNEHQADQLAALAN</sequence>
<dbReference type="EMBL" id="CP001614">
    <property type="protein sequence ID" value="ACR11705.1"/>
    <property type="molecule type" value="Genomic_DNA"/>
</dbReference>
<dbReference type="RefSeq" id="WP_015817817.1">
    <property type="nucleotide sequence ID" value="NC_012997.1"/>
</dbReference>
<dbReference type="SMR" id="C5BSZ6"/>
<dbReference type="STRING" id="377629.TERTU_3844"/>
<dbReference type="KEGG" id="ttu:TERTU_3844"/>
<dbReference type="eggNOG" id="COG0216">
    <property type="taxonomic scope" value="Bacteria"/>
</dbReference>
<dbReference type="HOGENOM" id="CLU_036856_0_1_6"/>
<dbReference type="OrthoDB" id="9806673at2"/>
<dbReference type="Proteomes" id="UP000009080">
    <property type="component" value="Chromosome"/>
</dbReference>
<dbReference type="GO" id="GO:0005737">
    <property type="term" value="C:cytoplasm"/>
    <property type="evidence" value="ECO:0007669"/>
    <property type="project" value="UniProtKB-SubCell"/>
</dbReference>
<dbReference type="GO" id="GO:0016149">
    <property type="term" value="F:translation release factor activity, codon specific"/>
    <property type="evidence" value="ECO:0007669"/>
    <property type="project" value="UniProtKB-UniRule"/>
</dbReference>
<dbReference type="FunFam" id="3.30.160.20:FF:000004">
    <property type="entry name" value="Peptide chain release factor 1"/>
    <property type="match status" value="1"/>
</dbReference>
<dbReference type="FunFam" id="3.30.70.1660:FF:000002">
    <property type="entry name" value="Peptide chain release factor 1"/>
    <property type="match status" value="1"/>
</dbReference>
<dbReference type="FunFam" id="3.30.70.1660:FF:000004">
    <property type="entry name" value="Peptide chain release factor 1"/>
    <property type="match status" value="1"/>
</dbReference>
<dbReference type="Gene3D" id="3.30.160.20">
    <property type="match status" value="1"/>
</dbReference>
<dbReference type="Gene3D" id="3.30.70.1660">
    <property type="match status" value="1"/>
</dbReference>
<dbReference type="Gene3D" id="6.10.140.1950">
    <property type="match status" value="1"/>
</dbReference>
<dbReference type="HAMAP" id="MF_00093">
    <property type="entry name" value="Rel_fac_1"/>
    <property type="match status" value="1"/>
</dbReference>
<dbReference type="InterPro" id="IPR005139">
    <property type="entry name" value="PCRF"/>
</dbReference>
<dbReference type="InterPro" id="IPR000352">
    <property type="entry name" value="Pep_chain_release_fac_I"/>
</dbReference>
<dbReference type="InterPro" id="IPR045853">
    <property type="entry name" value="Pep_chain_release_fac_I_sf"/>
</dbReference>
<dbReference type="InterPro" id="IPR050057">
    <property type="entry name" value="Prokaryotic/Mito_RF"/>
</dbReference>
<dbReference type="InterPro" id="IPR004373">
    <property type="entry name" value="RF-1"/>
</dbReference>
<dbReference type="NCBIfam" id="TIGR00019">
    <property type="entry name" value="prfA"/>
    <property type="match status" value="1"/>
</dbReference>
<dbReference type="NCBIfam" id="NF001859">
    <property type="entry name" value="PRK00591.1"/>
    <property type="match status" value="1"/>
</dbReference>
<dbReference type="PANTHER" id="PTHR43804">
    <property type="entry name" value="LD18447P"/>
    <property type="match status" value="1"/>
</dbReference>
<dbReference type="PANTHER" id="PTHR43804:SF7">
    <property type="entry name" value="LD18447P"/>
    <property type="match status" value="1"/>
</dbReference>
<dbReference type="Pfam" id="PF03462">
    <property type="entry name" value="PCRF"/>
    <property type="match status" value="1"/>
</dbReference>
<dbReference type="Pfam" id="PF00472">
    <property type="entry name" value="RF-1"/>
    <property type="match status" value="1"/>
</dbReference>
<dbReference type="SMART" id="SM00937">
    <property type="entry name" value="PCRF"/>
    <property type="match status" value="1"/>
</dbReference>
<dbReference type="SUPFAM" id="SSF75620">
    <property type="entry name" value="Release factor"/>
    <property type="match status" value="1"/>
</dbReference>
<dbReference type="PROSITE" id="PS00745">
    <property type="entry name" value="RF_PROK_I"/>
    <property type="match status" value="1"/>
</dbReference>
<protein>
    <recommendedName>
        <fullName evidence="1">Peptide chain release factor 1</fullName>
        <shortName evidence="1">RF-1</shortName>
    </recommendedName>
</protein>